<accession>P57305</accession>
<protein>
    <recommendedName>
        <fullName evidence="1">Polyamine aminopropyltransferase</fullName>
    </recommendedName>
    <alternativeName>
        <fullName evidence="1">Putrescine aminopropyltransferase</fullName>
        <shortName evidence="1">PAPT</shortName>
    </alternativeName>
    <alternativeName>
        <fullName evidence="1">Spermidine synthase</fullName>
        <shortName evidence="1">SPDS</shortName>
        <shortName evidence="1">SPDSY</shortName>
        <ecNumber evidence="1">2.5.1.16</ecNumber>
    </alternativeName>
</protein>
<comment type="function">
    <text evidence="1">Catalyzes the irreversible transfer of a propylamine group from the amino donor S-adenosylmethioninamine (decarboxy-AdoMet) to putrescine (1,4-diaminobutane) to yield spermidine.</text>
</comment>
<comment type="catalytic activity">
    <reaction evidence="1">
        <text>S-adenosyl 3-(methylsulfanyl)propylamine + putrescine = S-methyl-5'-thioadenosine + spermidine + H(+)</text>
        <dbReference type="Rhea" id="RHEA:12721"/>
        <dbReference type="ChEBI" id="CHEBI:15378"/>
        <dbReference type="ChEBI" id="CHEBI:17509"/>
        <dbReference type="ChEBI" id="CHEBI:57443"/>
        <dbReference type="ChEBI" id="CHEBI:57834"/>
        <dbReference type="ChEBI" id="CHEBI:326268"/>
        <dbReference type="EC" id="2.5.1.16"/>
    </reaction>
</comment>
<comment type="pathway">
    <text evidence="1">Amine and polyamine biosynthesis; spermidine biosynthesis; spermidine from putrescine: step 1/1.</text>
</comment>
<comment type="subunit">
    <text evidence="1">Homodimer or homotetramer.</text>
</comment>
<comment type="subcellular location">
    <subcellularLocation>
        <location evidence="1">Cytoplasm</location>
    </subcellularLocation>
</comment>
<comment type="similarity">
    <text evidence="1">Belongs to the spermidine/spermine synthase family.</text>
</comment>
<reference key="1">
    <citation type="journal article" date="2000" name="Nature">
        <title>Genome sequence of the endocellular bacterial symbiont of aphids Buchnera sp. APS.</title>
        <authorList>
            <person name="Shigenobu S."/>
            <person name="Watanabe H."/>
            <person name="Hattori M."/>
            <person name="Sakaki Y."/>
            <person name="Ishikawa H."/>
        </authorList>
    </citation>
    <scope>NUCLEOTIDE SEQUENCE [LARGE SCALE GENOMIC DNA]</scope>
    <source>
        <strain>APS</strain>
    </source>
</reference>
<evidence type="ECO:0000255" key="1">
    <source>
        <dbReference type="HAMAP-Rule" id="MF_00198"/>
    </source>
</evidence>
<organism>
    <name type="scientific">Buchnera aphidicola subsp. Acyrthosiphon pisum (strain APS)</name>
    <name type="common">Acyrthosiphon pisum symbiotic bacterium</name>
    <dbReference type="NCBI Taxonomy" id="107806"/>
    <lineage>
        <taxon>Bacteria</taxon>
        <taxon>Pseudomonadati</taxon>
        <taxon>Pseudomonadota</taxon>
        <taxon>Gammaproteobacteria</taxon>
        <taxon>Enterobacterales</taxon>
        <taxon>Erwiniaceae</taxon>
        <taxon>Buchnera</taxon>
    </lineage>
</organism>
<gene>
    <name evidence="1" type="primary">speE</name>
    <name type="ordered locus">BU209</name>
</gene>
<name>SPEE_BUCAI</name>
<dbReference type="EC" id="2.5.1.16" evidence="1"/>
<dbReference type="EMBL" id="BA000003">
    <property type="protein sequence ID" value="BAB12926.1"/>
    <property type="molecule type" value="Genomic_DNA"/>
</dbReference>
<dbReference type="RefSeq" id="NP_240040.1">
    <property type="nucleotide sequence ID" value="NC_002528.1"/>
</dbReference>
<dbReference type="RefSeq" id="WP_009874167.1">
    <property type="nucleotide sequence ID" value="NZ_AP036055.1"/>
</dbReference>
<dbReference type="SMR" id="P57305"/>
<dbReference type="STRING" id="563178.BUAP5A_206"/>
<dbReference type="EnsemblBacteria" id="BAB12926">
    <property type="protein sequence ID" value="BAB12926"/>
    <property type="gene ID" value="BAB12926"/>
</dbReference>
<dbReference type="KEGG" id="buc:BU209"/>
<dbReference type="PATRIC" id="fig|107806.10.peg.221"/>
<dbReference type="eggNOG" id="COG0421">
    <property type="taxonomic scope" value="Bacteria"/>
</dbReference>
<dbReference type="HOGENOM" id="CLU_048199_1_0_6"/>
<dbReference type="UniPathway" id="UPA00248">
    <property type="reaction ID" value="UER00314"/>
</dbReference>
<dbReference type="Proteomes" id="UP000001806">
    <property type="component" value="Chromosome"/>
</dbReference>
<dbReference type="GO" id="GO:0005829">
    <property type="term" value="C:cytosol"/>
    <property type="evidence" value="ECO:0007669"/>
    <property type="project" value="TreeGrafter"/>
</dbReference>
<dbReference type="GO" id="GO:0004766">
    <property type="term" value="F:spermidine synthase activity"/>
    <property type="evidence" value="ECO:0007669"/>
    <property type="project" value="UniProtKB-UniRule"/>
</dbReference>
<dbReference type="GO" id="GO:0008295">
    <property type="term" value="P:spermidine biosynthetic process"/>
    <property type="evidence" value="ECO:0007669"/>
    <property type="project" value="UniProtKB-UniRule"/>
</dbReference>
<dbReference type="CDD" id="cd02440">
    <property type="entry name" value="AdoMet_MTases"/>
    <property type="match status" value="1"/>
</dbReference>
<dbReference type="Gene3D" id="2.30.140.10">
    <property type="entry name" value="Spermidine synthase, tetramerisation domain"/>
    <property type="match status" value="1"/>
</dbReference>
<dbReference type="Gene3D" id="3.40.50.150">
    <property type="entry name" value="Vaccinia Virus protein VP39"/>
    <property type="match status" value="1"/>
</dbReference>
<dbReference type="HAMAP" id="MF_00198">
    <property type="entry name" value="Spermidine_synth"/>
    <property type="match status" value="1"/>
</dbReference>
<dbReference type="InterPro" id="IPR030374">
    <property type="entry name" value="PABS"/>
</dbReference>
<dbReference type="InterPro" id="IPR030373">
    <property type="entry name" value="PABS_CS"/>
</dbReference>
<dbReference type="InterPro" id="IPR029063">
    <property type="entry name" value="SAM-dependent_MTases_sf"/>
</dbReference>
<dbReference type="InterPro" id="IPR001045">
    <property type="entry name" value="Spermi_synthase"/>
</dbReference>
<dbReference type="InterPro" id="IPR035246">
    <property type="entry name" value="Spermidine_synt_N"/>
</dbReference>
<dbReference type="InterPro" id="IPR037163">
    <property type="entry name" value="Spermidine_synt_N_sf"/>
</dbReference>
<dbReference type="NCBIfam" id="NF002010">
    <property type="entry name" value="PRK00811.1"/>
    <property type="match status" value="1"/>
</dbReference>
<dbReference type="NCBIfam" id="TIGR00417">
    <property type="entry name" value="speE"/>
    <property type="match status" value="1"/>
</dbReference>
<dbReference type="PANTHER" id="PTHR11558:SF11">
    <property type="entry name" value="SPERMIDINE SYNTHASE"/>
    <property type="match status" value="1"/>
</dbReference>
<dbReference type="PANTHER" id="PTHR11558">
    <property type="entry name" value="SPERMIDINE/SPERMINE SYNTHASE"/>
    <property type="match status" value="1"/>
</dbReference>
<dbReference type="Pfam" id="PF17284">
    <property type="entry name" value="Spermine_synt_N"/>
    <property type="match status" value="1"/>
</dbReference>
<dbReference type="Pfam" id="PF01564">
    <property type="entry name" value="Spermine_synth"/>
    <property type="match status" value="1"/>
</dbReference>
<dbReference type="SUPFAM" id="SSF53335">
    <property type="entry name" value="S-adenosyl-L-methionine-dependent methyltransferases"/>
    <property type="match status" value="1"/>
</dbReference>
<dbReference type="PROSITE" id="PS01330">
    <property type="entry name" value="PABS_1"/>
    <property type="match status" value="1"/>
</dbReference>
<dbReference type="PROSITE" id="PS51006">
    <property type="entry name" value="PABS_2"/>
    <property type="match status" value="1"/>
</dbReference>
<feature type="chain" id="PRO_0000156472" description="Polyamine aminopropyltransferase">
    <location>
        <begin position="1"/>
        <end position="286"/>
    </location>
</feature>
<feature type="domain" description="PABS" evidence="1">
    <location>
        <begin position="5"/>
        <end position="238"/>
    </location>
</feature>
<feature type="active site" description="Proton acceptor" evidence="1">
    <location>
        <position position="158"/>
    </location>
</feature>
<feature type="binding site" evidence="1">
    <location>
        <position position="64"/>
    </location>
    <ligand>
        <name>spermidine</name>
        <dbReference type="ChEBI" id="CHEBI:57834"/>
    </ligand>
</feature>
<feature type="binding site" evidence="1">
    <location>
        <position position="88"/>
    </location>
    <ligand>
        <name>spermidine</name>
        <dbReference type="ChEBI" id="CHEBI:57834"/>
    </ligand>
</feature>
<feature type="binding site" evidence="1">
    <location>
        <position position="108"/>
    </location>
    <ligand>
        <name>S-methyl-5'-thioadenosine</name>
        <dbReference type="ChEBI" id="CHEBI:17509"/>
    </ligand>
</feature>
<feature type="binding site" evidence="1">
    <location>
        <begin position="140"/>
        <end position="141"/>
    </location>
    <ligand>
        <name>S-methyl-5'-thioadenosine</name>
        <dbReference type="ChEBI" id="CHEBI:17509"/>
    </ligand>
</feature>
<feature type="binding site" evidence="1">
    <location>
        <begin position="158"/>
        <end position="161"/>
    </location>
    <ligand>
        <name>spermidine</name>
        <dbReference type="ChEBI" id="CHEBI:57834"/>
    </ligand>
</feature>
<sequence>MDHKKTWHEKLYCHLGQYFLIEKMLYKKKTPHHQVMIFKNSVFGKIMVIDDIVQTTERDEFIYHEMLTHVPIIAHGSIKSVLIIGGGDGGILREVCRYKMIENITMVEIDVNIIDLCKKYFPNHSNQAYQDSRLNLIIDDGLNFIKRTKEKFDLIISDSTDPIGCGKNLFRSEFYFNCKNHLEENGIFVAQNGVFFLQKNETILTYKNLKKYFYDTRFYQANVPTYYGGVMVFAWGTNNIEYRKNSLEKIQIRIKNTKLDFNYYNAKIHISSFYLPQYILNELNES</sequence>
<keyword id="KW-0963">Cytoplasm</keyword>
<keyword id="KW-0620">Polyamine biosynthesis</keyword>
<keyword id="KW-1185">Reference proteome</keyword>
<keyword id="KW-0745">Spermidine biosynthesis</keyword>
<keyword id="KW-0808">Transferase</keyword>
<proteinExistence type="inferred from homology"/>